<sequence length="416" mass="45966">MAAPTRSLRRLSSFRTTISPSLTVTAPIGCRSYATTDSSSATNTPGTTRRRATKFQDKLNAGPSFSDFVSGGQDEPLDPSEAYALKTALVGPAGRKKEMTRLPEWLKTPIPDSKNYQRLKKDLRGLNLHTVCEEARCPNISDCWGGSDKSSATATIMLMGDTCTRGCRFCSVKTSRAPPPLDPHEPENTAEAISRWSLGYVVLTSVDRDDLVDGGARHFAETVIKIKQKKPSMLVECLTGDFRGDTEMAALVARSGLDVYAHNVETVEELTPFVRDRRATFQQSIRVLDSAKKAVPELVTKTSLMLGLGETDEQLWDALRQLRAVNVDVVTFGQYMRPTKRHMAVHEYVTPDRFELWRQRALDMGFLYCASGPLVRSSYKAGEAFIENVLKKRRAGSGTAERTVDQTAATTDEATR</sequence>
<dbReference type="EC" id="2.8.1.8" evidence="1"/>
<dbReference type="EMBL" id="AM920435">
    <property type="protein sequence ID" value="CAP85649.1"/>
    <property type="molecule type" value="Genomic_DNA"/>
</dbReference>
<dbReference type="RefSeq" id="XP_002562872.1">
    <property type="nucleotide sequence ID" value="XM_002562826.1"/>
</dbReference>
<dbReference type="SMR" id="B6HFQ1"/>
<dbReference type="STRING" id="500485.B6HFQ1"/>
<dbReference type="GeneID" id="8317549"/>
<dbReference type="KEGG" id="pcs:N7525_008763"/>
<dbReference type="VEuPathDB" id="FungiDB:PCH_Pc20g03200"/>
<dbReference type="eggNOG" id="KOG2672">
    <property type="taxonomic scope" value="Eukaryota"/>
</dbReference>
<dbReference type="HOGENOM" id="CLU_033144_0_1_1"/>
<dbReference type="OMA" id="PYCDIDF"/>
<dbReference type="OrthoDB" id="3231at2759"/>
<dbReference type="BioCyc" id="PCHR:PC20G03200-MONOMER"/>
<dbReference type="UniPathway" id="UPA00538">
    <property type="reaction ID" value="UER00593"/>
</dbReference>
<dbReference type="Proteomes" id="UP000000724">
    <property type="component" value="Contig Pc00c20"/>
</dbReference>
<dbReference type="GO" id="GO:0005739">
    <property type="term" value="C:mitochondrion"/>
    <property type="evidence" value="ECO:0007669"/>
    <property type="project" value="UniProtKB-SubCell"/>
</dbReference>
<dbReference type="GO" id="GO:0051539">
    <property type="term" value="F:4 iron, 4 sulfur cluster binding"/>
    <property type="evidence" value="ECO:0007669"/>
    <property type="project" value="UniProtKB-UniRule"/>
</dbReference>
<dbReference type="GO" id="GO:0016992">
    <property type="term" value="F:lipoate synthase activity"/>
    <property type="evidence" value="ECO:0007669"/>
    <property type="project" value="UniProtKB-UniRule"/>
</dbReference>
<dbReference type="GO" id="GO:0046872">
    <property type="term" value="F:metal ion binding"/>
    <property type="evidence" value="ECO:0007669"/>
    <property type="project" value="UniProtKB-KW"/>
</dbReference>
<dbReference type="CDD" id="cd01335">
    <property type="entry name" value="Radical_SAM"/>
    <property type="match status" value="1"/>
</dbReference>
<dbReference type="FunFam" id="3.20.20.70:FF:000036">
    <property type="entry name" value="Lipoyl synthase, mitochondrial"/>
    <property type="match status" value="1"/>
</dbReference>
<dbReference type="Gene3D" id="3.20.20.70">
    <property type="entry name" value="Aldolase class I"/>
    <property type="match status" value="1"/>
</dbReference>
<dbReference type="HAMAP" id="MF_00206">
    <property type="entry name" value="Lipoyl_synth"/>
    <property type="match status" value="1"/>
</dbReference>
<dbReference type="InterPro" id="IPR013785">
    <property type="entry name" value="Aldolase_TIM"/>
</dbReference>
<dbReference type="InterPro" id="IPR006638">
    <property type="entry name" value="Elp3/MiaA/NifB-like_rSAM"/>
</dbReference>
<dbReference type="InterPro" id="IPR031691">
    <property type="entry name" value="LIAS_N"/>
</dbReference>
<dbReference type="InterPro" id="IPR003698">
    <property type="entry name" value="Lipoyl_synth"/>
</dbReference>
<dbReference type="InterPro" id="IPR007197">
    <property type="entry name" value="rSAM"/>
</dbReference>
<dbReference type="NCBIfam" id="TIGR00510">
    <property type="entry name" value="lipA"/>
    <property type="match status" value="1"/>
</dbReference>
<dbReference type="NCBIfam" id="NF004019">
    <property type="entry name" value="PRK05481.1"/>
    <property type="match status" value="1"/>
</dbReference>
<dbReference type="NCBIfam" id="NF009544">
    <property type="entry name" value="PRK12928.1"/>
    <property type="match status" value="1"/>
</dbReference>
<dbReference type="PANTHER" id="PTHR10949">
    <property type="entry name" value="LIPOYL SYNTHASE"/>
    <property type="match status" value="1"/>
</dbReference>
<dbReference type="PANTHER" id="PTHR10949:SF0">
    <property type="entry name" value="LIPOYL SYNTHASE, MITOCHONDRIAL"/>
    <property type="match status" value="1"/>
</dbReference>
<dbReference type="Pfam" id="PF16881">
    <property type="entry name" value="LIAS_N"/>
    <property type="match status" value="1"/>
</dbReference>
<dbReference type="Pfam" id="PF04055">
    <property type="entry name" value="Radical_SAM"/>
    <property type="match status" value="1"/>
</dbReference>
<dbReference type="SFLD" id="SFLDF00271">
    <property type="entry name" value="lipoyl_synthase"/>
    <property type="match status" value="1"/>
</dbReference>
<dbReference type="SFLD" id="SFLDS00029">
    <property type="entry name" value="Radical_SAM"/>
    <property type="match status" value="1"/>
</dbReference>
<dbReference type="SMART" id="SM00729">
    <property type="entry name" value="Elp3"/>
    <property type="match status" value="1"/>
</dbReference>
<dbReference type="SUPFAM" id="SSF102114">
    <property type="entry name" value="Radical SAM enzymes"/>
    <property type="match status" value="1"/>
</dbReference>
<dbReference type="PROSITE" id="PS51918">
    <property type="entry name" value="RADICAL_SAM"/>
    <property type="match status" value="1"/>
</dbReference>
<proteinExistence type="inferred from homology"/>
<comment type="function">
    <text evidence="1">Catalyzes the radical-mediated insertion of two sulfur atoms into the C-6 and C-8 positions of the octanoyl moiety bound to the lipoyl domains of lipoate-dependent enzymes, thereby converting the octanoylated domains into lipoylated derivatives.</text>
</comment>
<comment type="catalytic activity">
    <reaction evidence="1">
        <text>[[Fe-S] cluster scaffold protein carrying a second [4Fe-4S](2+) cluster] + N(6)-octanoyl-L-lysyl-[protein] + 2 oxidized [2Fe-2S]-[ferredoxin] + 2 S-adenosyl-L-methionine + 4 H(+) = [[Fe-S] cluster scaffold protein] + N(6)-[(R)-dihydrolipoyl]-L-lysyl-[protein] + 4 Fe(3+) + 2 hydrogen sulfide + 2 5'-deoxyadenosine + 2 L-methionine + 2 reduced [2Fe-2S]-[ferredoxin]</text>
        <dbReference type="Rhea" id="RHEA:16585"/>
        <dbReference type="Rhea" id="RHEA-COMP:9928"/>
        <dbReference type="Rhea" id="RHEA-COMP:10000"/>
        <dbReference type="Rhea" id="RHEA-COMP:10001"/>
        <dbReference type="Rhea" id="RHEA-COMP:10475"/>
        <dbReference type="Rhea" id="RHEA-COMP:14568"/>
        <dbReference type="Rhea" id="RHEA-COMP:14569"/>
        <dbReference type="ChEBI" id="CHEBI:15378"/>
        <dbReference type="ChEBI" id="CHEBI:17319"/>
        <dbReference type="ChEBI" id="CHEBI:29034"/>
        <dbReference type="ChEBI" id="CHEBI:29919"/>
        <dbReference type="ChEBI" id="CHEBI:33722"/>
        <dbReference type="ChEBI" id="CHEBI:33737"/>
        <dbReference type="ChEBI" id="CHEBI:33738"/>
        <dbReference type="ChEBI" id="CHEBI:57844"/>
        <dbReference type="ChEBI" id="CHEBI:59789"/>
        <dbReference type="ChEBI" id="CHEBI:78809"/>
        <dbReference type="ChEBI" id="CHEBI:83100"/>
        <dbReference type="EC" id="2.8.1.8"/>
    </reaction>
</comment>
<comment type="cofactor">
    <cofactor evidence="1">
        <name>[4Fe-4S] cluster</name>
        <dbReference type="ChEBI" id="CHEBI:49883"/>
    </cofactor>
    <text evidence="1">Binds 2 [4Fe-4S] clusters per subunit. One cluster is coordinated with 3 cysteines and an exchangeable S-adenosyl-L-methionine.</text>
</comment>
<comment type="pathway">
    <text evidence="1">Protein modification; protein lipoylation via endogenous pathway; protein N(6)-(lipoyl)lysine from octanoyl-[acyl-carrier-protein]: step 2/2.</text>
</comment>
<comment type="subcellular location">
    <subcellularLocation>
        <location evidence="1">Mitochondrion</location>
    </subcellularLocation>
</comment>
<comment type="similarity">
    <text evidence="1">Belongs to the radical SAM superfamily. Lipoyl synthase family.</text>
</comment>
<name>LIPA_PENRW</name>
<accession>B6HFQ1</accession>
<reference key="1">
    <citation type="journal article" date="2008" name="Nat. Biotechnol.">
        <title>Genome sequencing and analysis of the filamentous fungus Penicillium chrysogenum.</title>
        <authorList>
            <person name="van den Berg M.A."/>
            <person name="Albang R."/>
            <person name="Albermann K."/>
            <person name="Badger J.H."/>
            <person name="Daran J.-M."/>
            <person name="Driessen A.J.M."/>
            <person name="Garcia-Estrada C."/>
            <person name="Fedorova N.D."/>
            <person name="Harris D.M."/>
            <person name="Heijne W.H.M."/>
            <person name="Joardar V.S."/>
            <person name="Kiel J.A.K.W."/>
            <person name="Kovalchuk A."/>
            <person name="Martin J.F."/>
            <person name="Nierman W.C."/>
            <person name="Nijland J.G."/>
            <person name="Pronk J.T."/>
            <person name="Roubos J.A."/>
            <person name="van der Klei I.J."/>
            <person name="van Peij N.N.M.E."/>
            <person name="Veenhuis M."/>
            <person name="von Doehren H."/>
            <person name="Wagner C."/>
            <person name="Wortman J.R."/>
            <person name="Bovenberg R.A.L."/>
        </authorList>
    </citation>
    <scope>NUCLEOTIDE SEQUENCE [LARGE SCALE GENOMIC DNA]</scope>
    <source>
        <strain>ATCC 28089 / DSM 1075 / NRRL 1951 / Wisconsin 54-1255</strain>
    </source>
</reference>
<feature type="transit peptide" description="Mitochondrion" evidence="1">
    <location>
        <begin position="1"/>
        <end position="33"/>
    </location>
</feature>
<feature type="chain" id="PRO_5000409605" description="Lipoyl synthase, mitochondrial">
    <location>
        <begin position="34"/>
        <end position="416"/>
    </location>
</feature>
<feature type="domain" description="Radical SAM core" evidence="2">
    <location>
        <begin position="148"/>
        <end position="367"/>
    </location>
</feature>
<feature type="region of interest" description="Disordered" evidence="3">
    <location>
        <begin position="396"/>
        <end position="416"/>
    </location>
</feature>
<feature type="compositionally biased region" description="Polar residues" evidence="3">
    <location>
        <begin position="405"/>
        <end position="416"/>
    </location>
</feature>
<feature type="binding site" evidence="1">
    <location>
        <position position="132"/>
    </location>
    <ligand>
        <name>[4Fe-4S] cluster</name>
        <dbReference type="ChEBI" id="CHEBI:49883"/>
        <label>1</label>
    </ligand>
</feature>
<feature type="binding site" evidence="1">
    <location>
        <position position="137"/>
    </location>
    <ligand>
        <name>[4Fe-4S] cluster</name>
        <dbReference type="ChEBI" id="CHEBI:49883"/>
        <label>1</label>
    </ligand>
</feature>
<feature type="binding site" evidence="1">
    <location>
        <position position="143"/>
    </location>
    <ligand>
        <name>[4Fe-4S] cluster</name>
        <dbReference type="ChEBI" id="CHEBI:49883"/>
        <label>1</label>
    </ligand>
</feature>
<feature type="binding site" evidence="1">
    <location>
        <position position="163"/>
    </location>
    <ligand>
        <name>[4Fe-4S] cluster</name>
        <dbReference type="ChEBI" id="CHEBI:49883"/>
        <label>2</label>
        <note>4Fe-4S-S-AdoMet</note>
    </ligand>
</feature>
<feature type="binding site" evidence="1">
    <location>
        <position position="167"/>
    </location>
    <ligand>
        <name>[4Fe-4S] cluster</name>
        <dbReference type="ChEBI" id="CHEBI:49883"/>
        <label>2</label>
        <note>4Fe-4S-S-AdoMet</note>
    </ligand>
</feature>
<feature type="binding site" evidence="1">
    <location>
        <position position="170"/>
    </location>
    <ligand>
        <name>[4Fe-4S] cluster</name>
        <dbReference type="ChEBI" id="CHEBI:49883"/>
        <label>2</label>
        <note>4Fe-4S-S-AdoMet</note>
    </ligand>
</feature>
<feature type="binding site" evidence="1">
    <location>
        <position position="378"/>
    </location>
    <ligand>
        <name>[4Fe-4S] cluster</name>
        <dbReference type="ChEBI" id="CHEBI:49883"/>
        <label>1</label>
    </ligand>
</feature>
<keyword id="KW-0004">4Fe-4S</keyword>
<keyword id="KW-0408">Iron</keyword>
<keyword id="KW-0411">Iron-sulfur</keyword>
<keyword id="KW-0479">Metal-binding</keyword>
<keyword id="KW-0496">Mitochondrion</keyword>
<keyword id="KW-1185">Reference proteome</keyword>
<keyword id="KW-0949">S-adenosyl-L-methionine</keyword>
<keyword id="KW-0808">Transferase</keyword>
<keyword id="KW-0809">Transit peptide</keyword>
<organism>
    <name type="scientific">Penicillium rubens (strain ATCC 28089 / DSM 1075 / NRRL 1951 / Wisconsin 54-1255)</name>
    <name type="common">Penicillium chrysogenum</name>
    <dbReference type="NCBI Taxonomy" id="500485"/>
    <lineage>
        <taxon>Eukaryota</taxon>
        <taxon>Fungi</taxon>
        <taxon>Dikarya</taxon>
        <taxon>Ascomycota</taxon>
        <taxon>Pezizomycotina</taxon>
        <taxon>Eurotiomycetes</taxon>
        <taxon>Eurotiomycetidae</taxon>
        <taxon>Eurotiales</taxon>
        <taxon>Aspergillaceae</taxon>
        <taxon>Penicillium</taxon>
        <taxon>Penicillium chrysogenum species complex</taxon>
    </lineage>
</organism>
<evidence type="ECO:0000255" key="1">
    <source>
        <dbReference type="HAMAP-Rule" id="MF_03123"/>
    </source>
</evidence>
<evidence type="ECO:0000255" key="2">
    <source>
        <dbReference type="PROSITE-ProRule" id="PRU01266"/>
    </source>
</evidence>
<evidence type="ECO:0000256" key="3">
    <source>
        <dbReference type="SAM" id="MobiDB-lite"/>
    </source>
</evidence>
<protein>
    <recommendedName>
        <fullName evidence="1">Lipoyl synthase, mitochondrial</fullName>
        <ecNumber evidence="1">2.8.1.8</ecNumber>
    </recommendedName>
    <alternativeName>
        <fullName evidence="1">Lipoate synthase</fullName>
        <shortName evidence="1">LS</shortName>
        <shortName evidence="1">Lip-syn</shortName>
    </alternativeName>
    <alternativeName>
        <fullName evidence="1">Lipoic acid synthase</fullName>
    </alternativeName>
</protein>
<gene>
    <name type="ORF">Pc20g03200</name>
</gene>